<dbReference type="EC" id="5.4.2.12" evidence="1"/>
<dbReference type="EMBL" id="AL590842">
    <property type="protein sequence ID" value="CAL18753.1"/>
    <property type="molecule type" value="Genomic_DNA"/>
</dbReference>
<dbReference type="EMBL" id="AE009952">
    <property type="protein sequence ID" value="AAM83672.1"/>
    <property type="molecule type" value="Genomic_DNA"/>
</dbReference>
<dbReference type="EMBL" id="AE017042">
    <property type="protein sequence ID" value="AAS60344.1"/>
    <property type="molecule type" value="Genomic_DNA"/>
</dbReference>
<dbReference type="PIR" id="AH0008">
    <property type="entry name" value="AH0008"/>
</dbReference>
<dbReference type="RefSeq" id="YP_002345158.1">
    <property type="nucleotide sequence ID" value="NC_003143.1"/>
</dbReference>
<dbReference type="SMR" id="Q8ZJN0"/>
<dbReference type="STRING" id="214092.YPO0064"/>
<dbReference type="PaxDb" id="214092-YPO0064"/>
<dbReference type="DNASU" id="1145024"/>
<dbReference type="EnsemblBacteria" id="AAS60344">
    <property type="protein sequence ID" value="AAS60344"/>
    <property type="gene ID" value="YP_0064"/>
</dbReference>
<dbReference type="KEGG" id="ype:YPO0064"/>
<dbReference type="KEGG" id="ypk:y0077"/>
<dbReference type="KEGG" id="ypm:YP_0064"/>
<dbReference type="PATRIC" id="fig|1028802.3.peg.333"/>
<dbReference type="eggNOG" id="COG0696">
    <property type="taxonomic scope" value="Bacteria"/>
</dbReference>
<dbReference type="HOGENOM" id="CLU_026099_2_0_6"/>
<dbReference type="OMA" id="FMDGRDT"/>
<dbReference type="OrthoDB" id="9800863at2"/>
<dbReference type="UniPathway" id="UPA00109">
    <property type="reaction ID" value="UER00186"/>
</dbReference>
<dbReference type="PHI-base" id="PHI:11412"/>
<dbReference type="Proteomes" id="UP000000815">
    <property type="component" value="Chromosome"/>
</dbReference>
<dbReference type="Proteomes" id="UP000001019">
    <property type="component" value="Chromosome"/>
</dbReference>
<dbReference type="Proteomes" id="UP000002490">
    <property type="component" value="Chromosome"/>
</dbReference>
<dbReference type="GO" id="GO:0005829">
    <property type="term" value="C:cytosol"/>
    <property type="evidence" value="ECO:0000318"/>
    <property type="project" value="GO_Central"/>
</dbReference>
<dbReference type="GO" id="GO:0030145">
    <property type="term" value="F:manganese ion binding"/>
    <property type="evidence" value="ECO:0000318"/>
    <property type="project" value="GO_Central"/>
</dbReference>
<dbReference type="GO" id="GO:0004619">
    <property type="term" value="F:phosphoglycerate mutase activity"/>
    <property type="evidence" value="ECO:0000318"/>
    <property type="project" value="GO_Central"/>
</dbReference>
<dbReference type="GO" id="GO:0005975">
    <property type="term" value="P:carbohydrate metabolic process"/>
    <property type="evidence" value="ECO:0000318"/>
    <property type="project" value="GO_Central"/>
</dbReference>
<dbReference type="GO" id="GO:0006007">
    <property type="term" value="P:glucose catabolic process"/>
    <property type="evidence" value="ECO:0007669"/>
    <property type="project" value="InterPro"/>
</dbReference>
<dbReference type="GO" id="GO:0006096">
    <property type="term" value="P:glycolytic process"/>
    <property type="evidence" value="ECO:0007669"/>
    <property type="project" value="UniProtKB-UniRule"/>
</dbReference>
<dbReference type="CDD" id="cd16010">
    <property type="entry name" value="iPGM"/>
    <property type="match status" value="1"/>
</dbReference>
<dbReference type="FunFam" id="3.40.1450.10:FF:000001">
    <property type="entry name" value="2,3-bisphosphoglycerate-independent phosphoglycerate mutase"/>
    <property type="match status" value="1"/>
</dbReference>
<dbReference type="FunFam" id="3.40.720.10:FF:000001">
    <property type="entry name" value="2,3-bisphosphoglycerate-independent phosphoglycerate mutase"/>
    <property type="match status" value="1"/>
</dbReference>
<dbReference type="Gene3D" id="3.40.720.10">
    <property type="entry name" value="Alkaline Phosphatase, subunit A"/>
    <property type="match status" value="1"/>
</dbReference>
<dbReference type="Gene3D" id="3.40.1450.10">
    <property type="entry name" value="BPG-independent phosphoglycerate mutase, domain B"/>
    <property type="match status" value="1"/>
</dbReference>
<dbReference type="HAMAP" id="MF_01038">
    <property type="entry name" value="GpmI"/>
    <property type="match status" value="1"/>
</dbReference>
<dbReference type="InterPro" id="IPR017850">
    <property type="entry name" value="Alkaline_phosphatase_core_sf"/>
</dbReference>
<dbReference type="InterPro" id="IPR011258">
    <property type="entry name" value="BPG-indep_PGM_N"/>
</dbReference>
<dbReference type="InterPro" id="IPR006124">
    <property type="entry name" value="Metalloenzyme"/>
</dbReference>
<dbReference type="InterPro" id="IPR036646">
    <property type="entry name" value="PGAM_B_sf"/>
</dbReference>
<dbReference type="InterPro" id="IPR005995">
    <property type="entry name" value="Pgm_bpd_ind"/>
</dbReference>
<dbReference type="NCBIfam" id="TIGR01307">
    <property type="entry name" value="pgm_bpd_ind"/>
    <property type="match status" value="1"/>
</dbReference>
<dbReference type="NCBIfam" id="NF003897">
    <property type="entry name" value="PRK05434.1-5"/>
    <property type="match status" value="1"/>
</dbReference>
<dbReference type="PANTHER" id="PTHR31637">
    <property type="entry name" value="2,3-BISPHOSPHOGLYCERATE-INDEPENDENT PHOSPHOGLYCERATE MUTASE"/>
    <property type="match status" value="1"/>
</dbReference>
<dbReference type="PANTHER" id="PTHR31637:SF0">
    <property type="entry name" value="2,3-BISPHOSPHOGLYCERATE-INDEPENDENT PHOSPHOGLYCERATE MUTASE"/>
    <property type="match status" value="1"/>
</dbReference>
<dbReference type="Pfam" id="PF06415">
    <property type="entry name" value="iPGM_N"/>
    <property type="match status" value="1"/>
</dbReference>
<dbReference type="Pfam" id="PF01676">
    <property type="entry name" value="Metalloenzyme"/>
    <property type="match status" value="1"/>
</dbReference>
<dbReference type="PIRSF" id="PIRSF001492">
    <property type="entry name" value="IPGAM"/>
    <property type="match status" value="1"/>
</dbReference>
<dbReference type="SUPFAM" id="SSF64158">
    <property type="entry name" value="2,3-Bisphosphoglycerate-independent phosphoglycerate mutase, substrate-binding domain"/>
    <property type="match status" value="1"/>
</dbReference>
<dbReference type="SUPFAM" id="SSF53649">
    <property type="entry name" value="Alkaline phosphatase-like"/>
    <property type="match status" value="1"/>
</dbReference>
<feature type="chain" id="PRO_0000212234" description="2,3-bisphosphoglycerate-independent phosphoglycerate mutase">
    <location>
        <begin position="1"/>
        <end position="515"/>
    </location>
</feature>
<feature type="active site" description="Phosphoserine intermediate" evidence="1">
    <location>
        <position position="64"/>
    </location>
</feature>
<feature type="binding site" evidence="1">
    <location>
        <position position="14"/>
    </location>
    <ligand>
        <name>Mn(2+)</name>
        <dbReference type="ChEBI" id="CHEBI:29035"/>
        <label>2</label>
    </ligand>
</feature>
<feature type="binding site" evidence="1">
    <location>
        <position position="64"/>
    </location>
    <ligand>
        <name>Mn(2+)</name>
        <dbReference type="ChEBI" id="CHEBI:29035"/>
        <label>2</label>
    </ligand>
</feature>
<feature type="binding site" evidence="1">
    <location>
        <position position="125"/>
    </location>
    <ligand>
        <name>substrate</name>
    </ligand>
</feature>
<feature type="binding site" evidence="1">
    <location>
        <begin position="155"/>
        <end position="156"/>
    </location>
    <ligand>
        <name>substrate</name>
    </ligand>
</feature>
<feature type="binding site" evidence="1">
    <location>
        <position position="187"/>
    </location>
    <ligand>
        <name>substrate</name>
    </ligand>
</feature>
<feature type="binding site" evidence="1">
    <location>
        <position position="193"/>
    </location>
    <ligand>
        <name>substrate</name>
    </ligand>
</feature>
<feature type="binding site" evidence="1">
    <location>
        <begin position="263"/>
        <end position="266"/>
    </location>
    <ligand>
        <name>substrate</name>
    </ligand>
</feature>
<feature type="binding site" evidence="1">
    <location>
        <position position="337"/>
    </location>
    <ligand>
        <name>substrate</name>
    </ligand>
</feature>
<feature type="binding site" evidence="1">
    <location>
        <position position="404"/>
    </location>
    <ligand>
        <name>Mn(2+)</name>
        <dbReference type="ChEBI" id="CHEBI:29035"/>
        <label>1</label>
    </ligand>
</feature>
<feature type="binding site" evidence="1">
    <location>
        <position position="408"/>
    </location>
    <ligand>
        <name>Mn(2+)</name>
        <dbReference type="ChEBI" id="CHEBI:29035"/>
        <label>1</label>
    </ligand>
</feature>
<feature type="binding site" evidence="1">
    <location>
        <position position="445"/>
    </location>
    <ligand>
        <name>Mn(2+)</name>
        <dbReference type="ChEBI" id="CHEBI:29035"/>
        <label>2</label>
    </ligand>
</feature>
<feature type="binding site" evidence="1">
    <location>
        <position position="446"/>
    </location>
    <ligand>
        <name>Mn(2+)</name>
        <dbReference type="ChEBI" id="CHEBI:29035"/>
        <label>2</label>
    </ligand>
</feature>
<feature type="binding site" evidence="1">
    <location>
        <position position="464"/>
    </location>
    <ligand>
        <name>Mn(2+)</name>
        <dbReference type="ChEBI" id="CHEBI:29035"/>
        <label>1</label>
    </ligand>
</feature>
<reference key="1">
    <citation type="journal article" date="2001" name="Nature">
        <title>Genome sequence of Yersinia pestis, the causative agent of plague.</title>
        <authorList>
            <person name="Parkhill J."/>
            <person name="Wren B.W."/>
            <person name="Thomson N.R."/>
            <person name="Titball R.W."/>
            <person name="Holden M.T.G."/>
            <person name="Prentice M.B."/>
            <person name="Sebaihia M."/>
            <person name="James K.D."/>
            <person name="Churcher C.M."/>
            <person name="Mungall K.L."/>
            <person name="Baker S."/>
            <person name="Basham D."/>
            <person name="Bentley S.D."/>
            <person name="Brooks K."/>
            <person name="Cerdeno-Tarraga A.-M."/>
            <person name="Chillingworth T."/>
            <person name="Cronin A."/>
            <person name="Davies R.M."/>
            <person name="Davis P."/>
            <person name="Dougan G."/>
            <person name="Feltwell T."/>
            <person name="Hamlin N."/>
            <person name="Holroyd S."/>
            <person name="Jagels K."/>
            <person name="Karlyshev A.V."/>
            <person name="Leather S."/>
            <person name="Moule S."/>
            <person name="Oyston P.C.F."/>
            <person name="Quail M.A."/>
            <person name="Rutherford K.M."/>
            <person name="Simmonds M."/>
            <person name="Skelton J."/>
            <person name="Stevens K."/>
            <person name="Whitehead S."/>
            <person name="Barrell B.G."/>
        </authorList>
    </citation>
    <scope>NUCLEOTIDE SEQUENCE [LARGE SCALE GENOMIC DNA]</scope>
    <source>
        <strain>CO-92 / Biovar Orientalis</strain>
    </source>
</reference>
<reference key="2">
    <citation type="journal article" date="2002" name="J. Bacteriol.">
        <title>Genome sequence of Yersinia pestis KIM.</title>
        <authorList>
            <person name="Deng W."/>
            <person name="Burland V."/>
            <person name="Plunkett G. III"/>
            <person name="Boutin A."/>
            <person name="Mayhew G.F."/>
            <person name="Liss P."/>
            <person name="Perna N.T."/>
            <person name="Rose D.J."/>
            <person name="Mau B."/>
            <person name="Zhou S."/>
            <person name="Schwartz D.C."/>
            <person name="Fetherston J.D."/>
            <person name="Lindler L.E."/>
            <person name="Brubaker R.R."/>
            <person name="Plano G.V."/>
            <person name="Straley S.C."/>
            <person name="McDonough K.A."/>
            <person name="Nilles M.L."/>
            <person name="Matson J.S."/>
            <person name="Blattner F.R."/>
            <person name="Perry R.D."/>
        </authorList>
    </citation>
    <scope>NUCLEOTIDE SEQUENCE [LARGE SCALE GENOMIC DNA]</scope>
    <source>
        <strain>KIM10+ / Biovar Mediaevalis</strain>
    </source>
</reference>
<reference key="3">
    <citation type="journal article" date="2004" name="DNA Res.">
        <title>Complete genome sequence of Yersinia pestis strain 91001, an isolate avirulent to humans.</title>
        <authorList>
            <person name="Song Y."/>
            <person name="Tong Z."/>
            <person name="Wang J."/>
            <person name="Wang L."/>
            <person name="Guo Z."/>
            <person name="Han Y."/>
            <person name="Zhang J."/>
            <person name="Pei D."/>
            <person name="Zhou D."/>
            <person name="Qin H."/>
            <person name="Pang X."/>
            <person name="Han Y."/>
            <person name="Zhai J."/>
            <person name="Li M."/>
            <person name="Cui B."/>
            <person name="Qi Z."/>
            <person name="Jin L."/>
            <person name="Dai R."/>
            <person name="Chen F."/>
            <person name="Li S."/>
            <person name="Ye C."/>
            <person name="Du Z."/>
            <person name="Lin W."/>
            <person name="Wang J."/>
            <person name="Yu J."/>
            <person name="Yang H."/>
            <person name="Wang J."/>
            <person name="Huang P."/>
            <person name="Yang R."/>
        </authorList>
    </citation>
    <scope>NUCLEOTIDE SEQUENCE [LARGE SCALE GENOMIC DNA]</scope>
    <source>
        <strain>91001 / Biovar Mediaevalis</strain>
    </source>
</reference>
<name>GPMI_YERPE</name>
<evidence type="ECO:0000255" key="1">
    <source>
        <dbReference type="HAMAP-Rule" id="MF_01038"/>
    </source>
</evidence>
<protein>
    <recommendedName>
        <fullName evidence="1">2,3-bisphosphoglycerate-independent phosphoglycerate mutase</fullName>
        <shortName evidence="1">BPG-independent PGAM</shortName>
        <shortName evidence="1">Phosphoglyceromutase</shortName>
        <shortName evidence="1">iPGM</shortName>
        <ecNumber evidence="1">5.4.2.12</ecNumber>
    </recommendedName>
</protein>
<sequence length="515" mass="56168">MSSTKKPLVLTILDGYGHREEQQDNAILNAKTPVMDVLWQQQPHTLIAASGLDVGLPDGQMGNSEVGHVNLGAGRIVYQDLTRLDKEIKEGDFFTNPTLTAAVDNAVKTGKAVHIMGLLSAGGVHSHEDHIMAMVELAAKRGATAIYLHAFLDGRDTPPRSAESSLKRFTAKFAELGNGRIASIIGRYYAMDRDNRWDRVQLAYDLLTQAKGEFTADNAVAGLQAAYARGENDEFVKPTVIQATGEADAAMNEGDTLIFMNFRADRARQITRTFVNAEFDGFKRDKVVNFGDFIMLTEYAADIKVACAYPPASLTNTFGEWLMKHDKTQLRISETEKYAHVTFFYNGGVEEPFKGEDRILINSPKVATYDLQPEMSSAELTEKLVSAIGSGKYDVIICNYPNGDMVGHTGDYDAAVKAVETLDNCIEQVVAAVKAADGQLLITADHGNAEQMRDPATGQAHTAHTSLPVPLIYVGNKAVKAVEGGKLSDIAPTMLSLMEMEIPQEMTGKPLFIVE</sequence>
<gene>
    <name evidence="1" type="primary">gpmI</name>
    <name type="ordered locus">YPO0064</name>
    <name type="ordered locus">y0077</name>
    <name type="ordered locus">YP_0064</name>
</gene>
<comment type="function">
    <text evidence="1">Catalyzes the interconversion of 2-phosphoglycerate and 3-phosphoglycerate.</text>
</comment>
<comment type="catalytic activity">
    <reaction evidence="1">
        <text>(2R)-2-phosphoglycerate = (2R)-3-phosphoglycerate</text>
        <dbReference type="Rhea" id="RHEA:15901"/>
        <dbReference type="ChEBI" id="CHEBI:58272"/>
        <dbReference type="ChEBI" id="CHEBI:58289"/>
        <dbReference type="EC" id="5.4.2.12"/>
    </reaction>
</comment>
<comment type="cofactor">
    <cofactor evidence="1">
        <name>Mn(2+)</name>
        <dbReference type="ChEBI" id="CHEBI:29035"/>
    </cofactor>
    <text evidence="1">Binds 2 manganese ions per subunit.</text>
</comment>
<comment type="pathway">
    <text evidence="1">Carbohydrate degradation; glycolysis; pyruvate from D-glyceraldehyde 3-phosphate: step 3/5.</text>
</comment>
<comment type="subunit">
    <text evidence="1">Monomer.</text>
</comment>
<comment type="similarity">
    <text evidence="1">Belongs to the BPG-independent phosphoglycerate mutase family.</text>
</comment>
<proteinExistence type="inferred from homology"/>
<keyword id="KW-0324">Glycolysis</keyword>
<keyword id="KW-0413">Isomerase</keyword>
<keyword id="KW-0464">Manganese</keyword>
<keyword id="KW-0479">Metal-binding</keyword>
<keyword id="KW-1185">Reference proteome</keyword>
<accession>Q8ZJN0</accession>
<accession>Q0WKN0</accession>
<organism>
    <name type="scientific">Yersinia pestis</name>
    <dbReference type="NCBI Taxonomy" id="632"/>
    <lineage>
        <taxon>Bacteria</taxon>
        <taxon>Pseudomonadati</taxon>
        <taxon>Pseudomonadota</taxon>
        <taxon>Gammaproteobacteria</taxon>
        <taxon>Enterobacterales</taxon>
        <taxon>Yersiniaceae</taxon>
        <taxon>Yersinia</taxon>
    </lineage>
</organism>